<organism>
    <name type="scientific">Pseudomonas aeruginosa (strain ATCC 15692 / DSM 22644 / CIP 104116 / JCM 14847 / LMG 12228 / 1C / PRS 101 / PAO1)</name>
    <dbReference type="NCBI Taxonomy" id="208964"/>
    <lineage>
        <taxon>Bacteria</taxon>
        <taxon>Pseudomonadati</taxon>
        <taxon>Pseudomonadota</taxon>
        <taxon>Gammaproteobacteria</taxon>
        <taxon>Pseudomonadales</taxon>
        <taxon>Pseudomonadaceae</taxon>
        <taxon>Pseudomonas</taxon>
    </lineage>
</organism>
<dbReference type="EMBL" id="AF044261">
    <property type="protein sequence ID" value="AAC38778.1"/>
    <property type="molecule type" value="Genomic_DNA"/>
</dbReference>
<dbReference type="EMBL" id="AE004091">
    <property type="protein sequence ID" value="AAG05258.1"/>
    <property type="molecule type" value="Genomic_DNA"/>
</dbReference>
<dbReference type="PIR" id="D83411">
    <property type="entry name" value="D83411"/>
</dbReference>
<dbReference type="RefSeq" id="NP_250560.1">
    <property type="nucleotide sequence ID" value="NC_002516.2"/>
</dbReference>
<dbReference type="BMRB" id="O52658"/>
<dbReference type="SMR" id="O52658"/>
<dbReference type="IntAct" id="O52658">
    <property type="interactions" value="2"/>
</dbReference>
<dbReference type="STRING" id="208964.PA1869"/>
<dbReference type="PaxDb" id="208964-PA1869"/>
<dbReference type="DNASU" id="881955"/>
<dbReference type="GeneID" id="881955"/>
<dbReference type="KEGG" id="pae:PA1869"/>
<dbReference type="PATRIC" id="fig|208964.12.peg.1946"/>
<dbReference type="PseudoCAP" id="PA1869"/>
<dbReference type="HOGENOM" id="CLU_108696_5_1_6"/>
<dbReference type="InParanoid" id="O52658"/>
<dbReference type="OrthoDB" id="9804551at2"/>
<dbReference type="PhylomeDB" id="O52658"/>
<dbReference type="BioCyc" id="PAER208964:G1FZ6-1909-MONOMER"/>
<dbReference type="UniPathway" id="UPA00094"/>
<dbReference type="PHI-base" id="PHI:8556"/>
<dbReference type="Proteomes" id="UP000002438">
    <property type="component" value="Chromosome"/>
</dbReference>
<dbReference type="GO" id="GO:0005829">
    <property type="term" value="C:cytosol"/>
    <property type="evidence" value="ECO:0000318"/>
    <property type="project" value="GO_Central"/>
</dbReference>
<dbReference type="GO" id="GO:0016020">
    <property type="term" value="C:membrane"/>
    <property type="evidence" value="ECO:0007669"/>
    <property type="project" value="GOC"/>
</dbReference>
<dbReference type="GO" id="GO:0000035">
    <property type="term" value="F:acyl binding"/>
    <property type="evidence" value="ECO:0000318"/>
    <property type="project" value="GO_Central"/>
</dbReference>
<dbReference type="GO" id="GO:0000036">
    <property type="term" value="F:acyl carrier activity"/>
    <property type="evidence" value="ECO:0000318"/>
    <property type="project" value="GO_Central"/>
</dbReference>
<dbReference type="GO" id="GO:0031177">
    <property type="term" value="F:phosphopantetheine binding"/>
    <property type="evidence" value="ECO:0007669"/>
    <property type="project" value="InterPro"/>
</dbReference>
<dbReference type="GO" id="GO:0009245">
    <property type="term" value="P:lipid A biosynthetic process"/>
    <property type="evidence" value="ECO:0000318"/>
    <property type="project" value="GO_Central"/>
</dbReference>
<dbReference type="Gene3D" id="1.10.1200.10">
    <property type="entry name" value="ACP-like"/>
    <property type="match status" value="1"/>
</dbReference>
<dbReference type="HAMAP" id="MF_01217">
    <property type="entry name" value="Acyl_carrier"/>
    <property type="match status" value="1"/>
</dbReference>
<dbReference type="InterPro" id="IPR003231">
    <property type="entry name" value="ACP"/>
</dbReference>
<dbReference type="InterPro" id="IPR036736">
    <property type="entry name" value="ACP-like_sf"/>
</dbReference>
<dbReference type="InterPro" id="IPR020806">
    <property type="entry name" value="PKS_PP-bd"/>
</dbReference>
<dbReference type="InterPro" id="IPR009081">
    <property type="entry name" value="PP-bd_ACP"/>
</dbReference>
<dbReference type="InterPro" id="IPR006162">
    <property type="entry name" value="Ppantetheine_attach_site"/>
</dbReference>
<dbReference type="NCBIfam" id="TIGR00517">
    <property type="entry name" value="acyl_carrier"/>
    <property type="match status" value="1"/>
</dbReference>
<dbReference type="NCBIfam" id="NF002148">
    <property type="entry name" value="PRK00982.1-2"/>
    <property type="match status" value="1"/>
</dbReference>
<dbReference type="NCBIfam" id="NF002150">
    <property type="entry name" value="PRK00982.1-4"/>
    <property type="match status" value="1"/>
</dbReference>
<dbReference type="PANTHER" id="PTHR20863">
    <property type="entry name" value="ACYL CARRIER PROTEIN"/>
    <property type="match status" value="1"/>
</dbReference>
<dbReference type="PANTHER" id="PTHR20863:SF76">
    <property type="entry name" value="CARRIER DOMAIN-CONTAINING PROTEIN"/>
    <property type="match status" value="1"/>
</dbReference>
<dbReference type="Pfam" id="PF00550">
    <property type="entry name" value="PP-binding"/>
    <property type="match status" value="1"/>
</dbReference>
<dbReference type="SMART" id="SM00823">
    <property type="entry name" value="PKS_PP"/>
    <property type="match status" value="1"/>
</dbReference>
<dbReference type="SUPFAM" id="SSF47336">
    <property type="entry name" value="ACP-like"/>
    <property type="match status" value="1"/>
</dbReference>
<dbReference type="PROSITE" id="PS50075">
    <property type="entry name" value="CARRIER"/>
    <property type="match status" value="1"/>
</dbReference>
<dbReference type="PROSITE" id="PS00012">
    <property type="entry name" value="PHOSPHOPANTETHEINE"/>
    <property type="match status" value="1"/>
</dbReference>
<sequence>MDDIETRVRKLVAARFGVEECDIRLDSDFRNDFGAESLEVVELVMALEAEFGVEIADDDAERIETVRQAIDYLEEAVPT</sequence>
<accession>O52658</accession>
<reference key="1">
    <citation type="journal article" date="1998" name="Mol. Microbiol.">
        <title>Identification of an additional member of the secretin superfamily of proteins in Pseudomonas aeruginosa that is able to function in type II protein secretion.</title>
        <authorList>
            <person name="Martinez A."/>
            <person name="Ostrovsky P."/>
            <person name="Nunn D.N."/>
        </authorList>
    </citation>
    <scope>NUCLEOTIDE SEQUENCE [GENOMIC DNA]</scope>
    <source>
        <strain>K</strain>
    </source>
</reference>
<reference key="2">
    <citation type="journal article" date="2000" name="Nature">
        <title>Complete genome sequence of Pseudomonas aeruginosa PAO1, an opportunistic pathogen.</title>
        <authorList>
            <person name="Stover C.K."/>
            <person name="Pham X.-Q.T."/>
            <person name="Erwin A.L."/>
            <person name="Mizoguchi S.D."/>
            <person name="Warrener P."/>
            <person name="Hickey M.J."/>
            <person name="Brinkman F.S.L."/>
            <person name="Hufnagle W.O."/>
            <person name="Kowalik D.J."/>
            <person name="Lagrou M."/>
            <person name="Garber R.L."/>
            <person name="Goltry L."/>
            <person name="Tolentino E."/>
            <person name="Westbrock-Wadman S."/>
            <person name="Yuan Y."/>
            <person name="Brody L.L."/>
            <person name="Coulter S.N."/>
            <person name="Folger K.R."/>
            <person name="Kas A."/>
            <person name="Larbig K."/>
            <person name="Lim R.M."/>
            <person name="Smith K.A."/>
            <person name="Spencer D.H."/>
            <person name="Wong G.K.-S."/>
            <person name="Wu Z."/>
            <person name="Paulsen I.T."/>
            <person name="Reizer J."/>
            <person name="Saier M.H. Jr."/>
            <person name="Hancock R.E.W."/>
            <person name="Lory S."/>
            <person name="Olson M.V."/>
        </authorList>
    </citation>
    <scope>NUCLEOTIDE SEQUENCE [LARGE SCALE GENOMIC DNA]</scope>
    <source>
        <strain>ATCC 15692 / DSM 22644 / CIP 104116 / JCM 14847 / LMG 12228 / 1C / PRS 101 / PAO1</strain>
    </source>
</reference>
<feature type="chain" id="PRO_0000180168" description="Acyl carrier protein 2">
    <location>
        <begin position="1"/>
        <end position="79"/>
    </location>
</feature>
<feature type="domain" description="Carrier" evidence="2">
    <location>
        <begin position="2"/>
        <end position="77"/>
    </location>
</feature>
<feature type="modified residue" description="O-(pantetheine 4'-phosphoryl)serine" evidence="2">
    <location>
        <position position="37"/>
    </location>
</feature>
<proteinExistence type="inferred from homology"/>
<comment type="function">
    <text evidence="1">Carrier of the growing fatty acid chain in fatty acid biosynthesis.</text>
</comment>
<comment type="pathway">
    <text evidence="1">Lipid metabolism; fatty acid biosynthesis.</text>
</comment>
<comment type="subcellular location">
    <subcellularLocation>
        <location evidence="1">Cytoplasm</location>
    </subcellularLocation>
</comment>
<comment type="PTM">
    <text evidence="1">4'-phosphopantetheine is transferred from CoA to a specific serine of apo-ACP by AcpS. This modification is essential for activity because fatty acids are bound in thioester linkage to the sulfhydryl of the prosthetic group.</text>
</comment>
<comment type="similarity">
    <text evidence="1">Belongs to the acyl carrier protein (ACP) family.</text>
</comment>
<evidence type="ECO:0000255" key="1">
    <source>
        <dbReference type="HAMAP-Rule" id="MF_01217"/>
    </source>
</evidence>
<evidence type="ECO:0000255" key="2">
    <source>
        <dbReference type="PROSITE-ProRule" id="PRU00258"/>
    </source>
</evidence>
<protein>
    <recommendedName>
        <fullName evidence="1">Acyl carrier protein 2</fullName>
        <shortName evidence="1">ACP 2</shortName>
    </recommendedName>
</protein>
<keyword id="KW-0963">Cytoplasm</keyword>
<keyword id="KW-0275">Fatty acid biosynthesis</keyword>
<keyword id="KW-0276">Fatty acid metabolism</keyword>
<keyword id="KW-0444">Lipid biosynthesis</keyword>
<keyword id="KW-0443">Lipid metabolism</keyword>
<keyword id="KW-0596">Phosphopantetheine</keyword>
<keyword id="KW-0597">Phosphoprotein</keyword>
<keyword id="KW-1185">Reference proteome</keyword>
<name>ACP2_PSEAE</name>
<gene>
    <name evidence="1" type="primary">acpP2</name>
    <name type="ordered locus">PA1869</name>
</gene>